<proteinExistence type="inferred from homology"/>
<dbReference type="EMBL" id="Y18930">
    <property type="protein sequence ID" value="CAB57602.1"/>
    <property type="molecule type" value="Genomic_DNA"/>
</dbReference>
<dbReference type="EMBL" id="AE006641">
    <property type="protein sequence ID" value="AAK41002.1"/>
    <property type="molecule type" value="Genomic_DNA"/>
</dbReference>
<dbReference type="PIR" id="C90218">
    <property type="entry name" value="C90218"/>
</dbReference>
<dbReference type="RefSeq" id="WP_009991259.1">
    <property type="nucleotide sequence ID" value="NC_002754.1"/>
</dbReference>
<dbReference type="SMR" id="Q9UX90"/>
<dbReference type="FunCoup" id="Q9UX90">
    <property type="interactions" value="239"/>
</dbReference>
<dbReference type="STRING" id="273057.SSO0701"/>
<dbReference type="PaxDb" id="273057-SSO0701"/>
<dbReference type="EnsemblBacteria" id="AAK41002">
    <property type="protein sequence ID" value="AAK41002"/>
    <property type="gene ID" value="SSO0701"/>
</dbReference>
<dbReference type="KEGG" id="sso:SSO0701"/>
<dbReference type="PATRIC" id="fig|273057.12.peg.701"/>
<dbReference type="eggNOG" id="arCOG00781">
    <property type="taxonomic scope" value="Archaea"/>
</dbReference>
<dbReference type="HOGENOM" id="CLU_071479_3_0_2"/>
<dbReference type="InParanoid" id="Q9UX90"/>
<dbReference type="PhylomeDB" id="Q9UX90"/>
<dbReference type="Proteomes" id="UP000001974">
    <property type="component" value="Chromosome"/>
</dbReference>
<dbReference type="GO" id="GO:0022625">
    <property type="term" value="C:cytosolic large ribosomal subunit"/>
    <property type="evidence" value="ECO:0000318"/>
    <property type="project" value="GO_Central"/>
</dbReference>
<dbReference type="GO" id="GO:0003735">
    <property type="term" value="F:structural constituent of ribosome"/>
    <property type="evidence" value="ECO:0007669"/>
    <property type="project" value="InterPro"/>
</dbReference>
<dbReference type="GO" id="GO:0006412">
    <property type="term" value="P:translation"/>
    <property type="evidence" value="ECO:0007669"/>
    <property type="project" value="UniProtKB-UniRule"/>
</dbReference>
<dbReference type="CDD" id="cd00513">
    <property type="entry name" value="Ribosomal_L32_L32e"/>
    <property type="match status" value="1"/>
</dbReference>
<dbReference type="HAMAP" id="MF_00810">
    <property type="entry name" value="Ribosomal_eL32"/>
    <property type="match status" value="1"/>
</dbReference>
<dbReference type="InterPro" id="IPR001515">
    <property type="entry name" value="Ribosomal_eL32"/>
</dbReference>
<dbReference type="InterPro" id="IPR023654">
    <property type="entry name" value="Ribosomal_eL32_arc"/>
</dbReference>
<dbReference type="InterPro" id="IPR018263">
    <property type="entry name" value="Ribosomal_eL32_CS"/>
</dbReference>
<dbReference type="InterPro" id="IPR036351">
    <property type="entry name" value="Ribosomal_eL32_sf"/>
</dbReference>
<dbReference type="NCBIfam" id="NF006332">
    <property type="entry name" value="PRK08562.1"/>
    <property type="match status" value="1"/>
</dbReference>
<dbReference type="PANTHER" id="PTHR23413">
    <property type="entry name" value="60S RIBOSOMAL PROTEIN L32 AND DNA-DIRECTED RNA POLYMERASE II, SUBUNIT N"/>
    <property type="match status" value="1"/>
</dbReference>
<dbReference type="PANTHER" id="PTHR23413:SF1">
    <property type="entry name" value="RIBOSOMAL PROTEIN L32"/>
    <property type="match status" value="1"/>
</dbReference>
<dbReference type="Pfam" id="PF01655">
    <property type="entry name" value="Ribosomal_L32e"/>
    <property type="match status" value="1"/>
</dbReference>
<dbReference type="SMART" id="SM01393">
    <property type="entry name" value="Ribosomal_L32e"/>
    <property type="match status" value="1"/>
</dbReference>
<dbReference type="SUPFAM" id="SSF52042">
    <property type="entry name" value="Ribosomal protein L32e"/>
    <property type="match status" value="1"/>
</dbReference>
<dbReference type="PROSITE" id="PS00580">
    <property type="entry name" value="RIBOSOMAL_L32E"/>
    <property type="match status" value="1"/>
</dbReference>
<sequence length="138" mass="16168">MTEGRIQSYRKKIYVIRQKLKAKKPKFLRYDSDKFYRLGRQEKWRRPYGRDNKTRLKVRGFPAIVSVGYRLPKKVRGFHPSGLRQVIVHNVNELVKVQNQKDNVIVTISSSVGFKKRLEILNKARELGLKVSNEGVVT</sequence>
<reference key="1">
    <citation type="journal article" date="2000" name="Genome">
        <title>Gene content and organization of a 281-kbp contig from the genome of the extremely thermophilic archaeon, Sulfolobus solfataricus P2.</title>
        <authorList>
            <person name="Charlebois R.L."/>
            <person name="Singh R.K."/>
            <person name="Chan-Weiher C.C.-Y."/>
            <person name="Allard G."/>
            <person name="Chow C."/>
            <person name="Confalonieri F."/>
            <person name="Curtis B."/>
            <person name="Duguet M."/>
            <person name="Erauso G."/>
            <person name="Faguy D."/>
            <person name="Gaasterland T."/>
            <person name="Garrett R.A."/>
            <person name="Gordon P."/>
            <person name="Jeffries A.C."/>
            <person name="Kozera C."/>
            <person name="Kushwaha N."/>
            <person name="Lafleur E."/>
            <person name="Medina N."/>
            <person name="Peng X."/>
            <person name="Penny S.L."/>
            <person name="She Q."/>
            <person name="St Jean A."/>
            <person name="van der Oost J."/>
            <person name="Young F."/>
            <person name="Zivanovic Y."/>
            <person name="Doolittle W.F."/>
            <person name="Ragan M.A."/>
            <person name="Sensen C.W."/>
        </authorList>
    </citation>
    <scope>NUCLEOTIDE SEQUENCE [LARGE SCALE GENOMIC DNA]</scope>
    <source>
        <strain>ATCC 35092 / DSM 1617 / JCM 11322 / P2</strain>
    </source>
</reference>
<reference key="2">
    <citation type="journal article" date="2001" name="Proc. Natl. Acad. Sci. U.S.A.">
        <title>The complete genome of the crenarchaeon Sulfolobus solfataricus P2.</title>
        <authorList>
            <person name="She Q."/>
            <person name="Singh R.K."/>
            <person name="Confalonieri F."/>
            <person name="Zivanovic Y."/>
            <person name="Allard G."/>
            <person name="Awayez M.J."/>
            <person name="Chan-Weiher C.C.-Y."/>
            <person name="Clausen I.G."/>
            <person name="Curtis B.A."/>
            <person name="De Moors A."/>
            <person name="Erauso G."/>
            <person name="Fletcher C."/>
            <person name="Gordon P.M.K."/>
            <person name="Heikamp-de Jong I."/>
            <person name="Jeffries A.C."/>
            <person name="Kozera C.J."/>
            <person name="Medina N."/>
            <person name="Peng X."/>
            <person name="Thi-Ngoc H.P."/>
            <person name="Redder P."/>
            <person name="Schenk M.E."/>
            <person name="Theriault C."/>
            <person name="Tolstrup N."/>
            <person name="Charlebois R.L."/>
            <person name="Doolittle W.F."/>
            <person name="Duguet M."/>
            <person name="Gaasterland T."/>
            <person name="Garrett R.A."/>
            <person name="Ragan M.A."/>
            <person name="Sensen C.W."/>
            <person name="Van der Oost J."/>
        </authorList>
    </citation>
    <scope>NUCLEOTIDE SEQUENCE [LARGE SCALE GENOMIC DNA]</scope>
    <source>
        <strain>ATCC 35092 / DSM 1617 / JCM 11322 / P2</strain>
    </source>
</reference>
<accession>Q9UX90</accession>
<gene>
    <name type="primary">rpl32e</name>
    <name type="ordered locus">SSO0701</name>
    <name type="ORF">C10_029</name>
</gene>
<comment type="similarity">
    <text evidence="1">Belongs to the eukaryotic ribosomal protein eL32 family.</text>
</comment>
<name>RL32_SACS2</name>
<protein>
    <recommendedName>
        <fullName evidence="1">Large ribosomal subunit protein eL32</fullName>
    </recommendedName>
    <alternativeName>
        <fullName>50S ribosomal protein L32e</fullName>
    </alternativeName>
</protein>
<organism>
    <name type="scientific">Saccharolobus solfataricus (strain ATCC 35092 / DSM 1617 / JCM 11322 / P2)</name>
    <name type="common">Sulfolobus solfataricus</name>
    <dbReference type="NCBI Taxonomy" id="273057"/>
    <lineage>
        <taxon>Archaea</taxon>
        <taxon>Thermoproteota</taxon>
        <taxon>Thermoprotei</taxon>
        <taxon>Sulfolobales</taxon>
        <taxon>Sulfolobaceae</taxon>
        <taxon>Saccharolobus</taxon>
    </lineage>
</organism>
<evidence type="ECO:0000305" key="1"/>
<feature type="chain" id="PRO_0000131165" description="Large ribosomal subunit protein eL32">
    <location>
        <begin position="1"/>
        <end position="138"/>
    </location>
</feature>
<keyword id="KW-1185">Reference proteome</keyword>
<keyword id="KW-0687">Ribonucleoprotein</keyword>
<keyword id="KW-0689">Ribosomal protein</keyword>